<accession>Q8IWB9</accession>
<accession>Q6AHZ5</accession>
<accession>Q8N3L0</accession>
<accession>Q9C0C5</accession>
<feature type="chain" id="PRO_0000244479" description="Testis-expressed protein 2">
    <location>
        <begin position="1"/>
        <end position="1127"/>
    </location>
</feature>
<feature type="transmembrane region" description="Helical" evidence="3">
    <location>
        <begin position="475"/>
        <end position="495"/>
    </location>
</feature>
<feature type="transmembrane region" description="Helical" evidence="3">
    <location>
        <begin position="497"/>
        <end position="517"/>
    </location>
</feature>
<feature type="domain" description="SMP-LTD" evidence="4">
    <location>
        <begin position="816"/>
        <end position="1101"/>
    </location>
</feature>
<feature type="region of interest" description="Disordered" evidence="5">
    <location>
        <begin position="1"/>
        <end position="27"/>
    </location>
</feature>
<feature type="region of interest" description="Disordered" evidence="5">
    <location>
        <begin position="133"/>
        <end position="279"/>
    </location>
</feature>
<feature type="region of interest" description="Disordered" evidence="5">
    <location>
        <begin position="348"/>
        <end position="386"/>
    </location>
</feature>
<feature type="region of interest" description="Disordered" evidence="5">
    <location>
        <begin position="648"/>
        <end position="685"/>
    </location>
</feature>
<feature type="region of interest" description="Disordered" evidence="5">
    <location>
        <begin position="715"/>
        <end position="764"/>
    </location>
</feature>
<feature type="region of interest" description="Disordered" evidence="5">
    <location>
        <begin position="786"/>
        <end position="816"/>
    </location>
</feature>
<feature type="region of interest" description="Disordered" evidence="5">
    <location>
        <begin position="947"/>
        <end position="980"/>
    </location>
</feature>
<feature type="compositionally biased region" description="Low complexity" evidence="5">
    <location>
        <begin position="133"/>
        <end position="187"/>
    </location>
</feature>
<feature type="compositionally biased region" description="Polar residues" evidence="5">
    <location>
        <begin position="249"/>
        <end position="275"/>
    </location>
</feature>
<feature type="compositionally biased region" description="Basic and acidic residues" evidence="5">
    <location>
        <begin position="366"/>
        <end position="382"/>
    </location>
</feature>
<feature type="compositionally biased region" description="Basic and acidic residues" evidence="5">
    <location>
        <begin position="650"/>
        <end position="670"/>
    </location>
</feature>
<feature type="compositionally biased region" description="Polar residues" evidence="5">
    <location>
        <begin position="735"/>
        <end position="750"/>
    </location>
</feature>
<feature type="compositionally biased region" description="Polar residues" evidence="5">
    <location>
        <begin position="787"/>
        <end position="804"/>
    </location>
</feature>
<feature type="compositionally biased region" description="Acidic residues" evidence="5">
    <location>
        <begin position="947"/>
        <end position="962"/>
    </location>
</feature>
<feature type="modified residue" description="Phosphoserine" evidence="10 13">
    <location>
        <position position="196"/>
    </location>
</feature>
<feature type="modified residue" description="Phosphothreonine" evidence="2">
    <location>
        <position position="262"/>
    </location>
</feature>
<feature type="modified residue" description="Phosphoserine" evidence="2">
    <location>
        <position position="265"/>
    </location>
</feature>
<feature type="modified residue" description="Phosphoserine" evidence="10 13 14">
    <location>
        <position position="266"/>
    </location>
</feature>
<feature type="modified residue" description="Phosphoserine" evidence="10">
    <location>
        <position position="270"/>
    </location>
</feature>
<feature type="modified residue" description="Phosphoserine" evidence="10 11 14">
    <location>
        <position position="295"/>
    </location>
</feature>
<feature type="modified residue" description="Phosphoserine" evidence="13 14">
    <location>
        <position position="732"/>
    </location>
</feature>
<feature type="modified residue" description="Phosphoserine" evidence="14">
    <location>
        <position position="738"/>
    </location>
</feature>
<feature type="modified residue" description="Phosphoserine" evidence="12 14">
    <location>
        <position position="744"/>
    </location>
</feature>
<feature type="modified residue" description="Phosphoserine" evidence="2">
    <location>
        <position position="748"/>
    </location>
</feature>
<feature type="modified residue" description="Phosphoserine" evidence="2">
    <location>
        <position position="751"/>
    </location>
</feature>
<feature type="modified residue" description="Phosphoserine" evidence="2">
    <location>
        <position position="798"/>
    </location>
</feature>
<feature type="modified residue" description="Phosphoserine" evidence="2">
    <location>
        <position position="815"/>
    </location>
</feature>
<feature type="glycosylation site" description="N-linked (GlcNAc...) asparagine" evidence="3">
    <location>
        <position position="330"/>
    </location>
</feature>
<feature type="splice variant" id="VSP_019569" description="In isoform 2." evidence="8">
    <original>K</original>
    <variation>KPAPVFLA</variation>
    <location>
        <position position="724"/>
    </location>
</feature>
<feature type="sequence variant" id="VAR_061712" description="In dbSNP:rs28605685.">
    <original>T</original>
    <variation>I</variation>
    <location>
        <position position="158"/>
    </location>
</feature>
<feature type="sequence conflict" description="In Ref. 3; AAH40521." evidence="9" ref="3">
    <original>R</original>
    <variation>K</variation>
    <location>
        <position position="53"/>
    </location>
</feature>
<feature type="sequence conflict" description="In Ref. 2; CAD38927." evidence="9" ref="2">
    <original>N</original>
    <variation>S</variation>
    <location>
        <position position="363"/>
    </location>
</feature>
<feature type="sequence conflict" description="In Ref. 2; CAH10519." evidence="9" ref="2">
    <original>P</original>
    <variation>S</variation>
    <location>
        <position position="446"/>
    </location>
</feature>
<feature type="sequence conflict" description="In Ref. 3; AAH40521." evidence="9" ref="3">
    <original>E</original>
    <variation>K</variation>
    <location>
        <position position="451"/>
    </location>
</feature>
<feature type="sequence conflict" description="In Ref. 2; CAD38927." evidence="9" ref="2">
    <original>I</original>
    <variation>V</variation>
    <location>
        <position position="608"/>
    </location>
</feature>
<feature type="sequence conflict" description="In Ref. 2; CAD38927." evidence="9" ref="2">
    <original>P</original>
    <variation>L</variation>
    <location>
        <position position="634"/>
    </location>
</feature>
<feature type="sequence conflict" description="In Ref. 2; CAH10519." evidence="9" ref="2">
    <original>PGLLP</original>
    <variation>LRAFA</variation>
    <location>
        <begin position="725"/>
        <end position="729"/>
    </location>
</feature>
<feature type="sequence conflict" description="In Ref. 2; CAD38927." evidence="9" ref="2">
    <original>F</original>
    <variation>S</variation>
    <location>
        <position position="835"/>
    </location>
</feature>
<dbReference type="EMBL" id="AB051525">
    <property type="protein sequence ID" value="BAB21829.2"/>
    <property type="molecule type" value="mRNA"/>
</dbReference>
<dbReference type="EMBL" id="AL834251">
    <property type="protein sequence ID" value="CAD38927.1"/>
    <property type="molecule type" value="mRNA"/>
</dbReference>
<dbReference type="EMBL" id="CR627433">
    <property type="protein sequence ID" value="CAH10519.1"/>
    <property type="molecule type" value="mRNA"/>
</dbReference>
<dbReference type="EMBL" id="BC040521">
    <property type="protein sequence ID" value="AAH40521.1"/>
    <property type="molecule type" value="mRNA"/>
</dbReference>
<dbReference type="CCDS" id="CCDS11658.1">
    <molecule id="Q8IWB9-2"/>
</dbReference>
<dbReference type="CCDS" id="CCDS74131.1">
    <molecule id="Q8IWB9-1"/>
</dbReference>
<dbReference type="RefSeq" id="NP_001275661.1">
    <molecule id="Q8IWB9-1"/>
    <property type="nucleotide sequence ID" value="NM_001288732.2"/>
</dbReference>
<dbReference type="RefSeq" id="NP_001275662.1">
    <molecule id="Q8IWB9-1"/>
    <property type="nucleotide sequence ID" value="NM_001288733.2"/>
</dbReference>
<dbReference type="RefSeq" id="NP_060939.3">
    <molecule id="Q8IWB9-2"/>
    <property type="nucleotide sequence ID" value="NM_018469.4"/>
</dbReference>
<dbReference type="RefSeq" id="XP_011523300.1">
    <molecule id="Q8IWB9-2"/>
    <property type="nucleotide sequence ID" value="XM_011524998.2"/>
</dbReference>
<dbReference type="RefSeq" id="XP_011523301.1">
    <molecule id="Q8IWB9-2"/>
    <property type="nucleotide sequence ID" value="XM_011524999.2"/>
</dbReference>
<dbReference type="RefSeq" id="XP_047292348.1">
    <molecule id="Q8IWB9-2"/>
    <property type="nucleotide sequence ID" value="XM_047436392.1"/>
</dbReference>
<dbReference type="RefSeq" id="XP_047292349.1">
    <molecule id="Q8IWB9-2"/>
    <property type="nucleotide sequence ID" value="XM_047436393.1"/>
</dbReference>
<dbReference type="RefSeq" id="XP_047292350.1">
    <molecule id="Q8IWB9-1"/>
    <property type="nucleotide sequence ID" value="XM_047436394.1"/>
</dbReference>
<dbReference type="RefSeq" id="XP_047292351.1">
    <molecule id="Q8IWB9-1"/>
    <property type="nucleotide sequence ID" value="XM_047436395.1"/>
</dbReference>
<dbReference type="RefSeq" id="XP_047292352.1">
    <molecule id="Q8IWB9-1"/>
    <property type="nucleotide sequence ID" value="XM_047436396.1"/>
</dbReference>
<dbReference type="RefSeq" id="XP_054172632.1">
    <molecule id="Q8IWB9-2"/>
    <property type="nucleotide sequence ID" value="XM_054316657.1"/>
</dbReference>
<dbReference type="RefSeq" id="XP_054172633.1">
    <molecule id="Q8IWB9-2"/>
    <property type="nucleotide sequence ID" value="XM_054316658.1"/>
</dbReference>
<dbReference type="RefSeq" id="XP_054172634.1">
    <molecule id="Q8IWB9-2"/>
    <property type="nucleotide sequence ID" value="XM_054316659.1"/>
</dbReference>
<dbReference type="RefSeq" id="XP_054172636.1">
    <molecule id="Q8IWB9-1"/>
    <property type="nucleotide sequence ID" value="XM_054316661.1"/>
</dbReference>
<dbReference type="RefSeq" id="XP_054172637.1">
    <molecule id="Q8IWB9-1"/>
    <property type="nucleotide sequence ID" value="XM_054316662.1"/>
</dbReference>
<dbReference type="RefSeq" id="XP_054172638.1">
    <molecule id="Q8IWB9-1"/>
    <property type="nucleotide sequence ID" value="XM_054316663.1"/>
</dbReference>
<dbReference type="BioGRID" id="120954">
    <property type="interactions" value="193"/>
</dbReference>
<dbReference type="DIP" id="DIP-47321N"/>
<dbReference type="FunCoup" id="Q8IWB9">
    <property type="interactions" value="1456"/>
</dbReference>
<dbReference type="IntAct" id="Q8IWB9">
    <property type="interactions" value="33"/>
</dbReference>
<dbReference type="MINT" id="Q8IWB9"/>
<dbReference type="STRING" id="9606.ENSP00000258991"/>
<dbReference type="GlyCosmos" id="Q8IWB9">
    <property type="glycosylation" value="3 sites, 1 glycan"/>
</dbReference>
<dbReference type="GlyGen" id="Q8IWB9">
    <property type="glycosylation" value="6 sites, 1 O-linked glycan (5 sites)"/>
</dbReference>
<dbReference type="iPTMnet" id="Q8IWB9"/>
<dbReference type="PhosphoSitePlus" id="Q8IWB9"/>
<dbReference type="BioMuta" id="TEX2"/>
<dbReference type="DMDM" id="109895136"/>
<dbReference type="jPOST" id="Q8IWB9"/>
<dbReference type="MassIVE" id="Q8IWB9"/>
<dbReference type="PaxDb" id="9606-ENSP00000258991"/>
<dbReference type="PeptideAtlas" id="Q8IWB9"/>
<dbReference type="ProteomicsDB" id="70839">
    <molecule id="Q8IWB9-1"/>
</dbReference>
<dbReference type="ProteomicsDB" id="70840">
    <molecule id="Q8IWB9-2"/>
</dbReference>
<dbReference type="Pumba" id="Q8IWB9"/>
<dbReference type="Antibodypedia" id="19114">
    <property type="antibodies" value="97 antibodies from 23 providers"/>
</dbReference>
<dbReference type="DNASU" id="55852"/>
<dbReference type="Ensembl" id="ENST00000258991.7">
    <molecule id="Q8IWB9-2"/>
    <property type="protein sequence ID" value="ENSP00000258991.3"/>
    <property type="gene ID" value="ENSG00000136478.9"/>
</dbReference>
<dbReference type="Ensembl" id="ENST00000583097.5">
    <molecule id="Q8IWB9-1"/>
    <property type="protein sequence ID" value="ENSP00000462665.1"/>
    <property type="gene ID" value="ENSG00000136478.9"/>
</dbReference>
<dbReference type="Ensembl" id="ENST00000584379.6">
    <molecule id="Q8IWB9-1"/>
    <property type="protein sequence ID" value="ENSP00000463001.1"/>
    <property type="gene ID" value="ENSG00000136478.9"/>
</dbReference>
<dbReference type="GeneID" id="55852"/>
<dbReference type="KEGG" id="hsa:55852"/>
<dbReference type="MANE-Select" id="ENST00000584379.6">
    <property type="protein sequence ID" value="ENSP00000463001.1"/>
    <property type="RefSeq nucleotide sequence ID" value="NM_001288732.2"/>
    <property type="RefSeq protein sequence ID" value="NP_001275661.1"/>
</dbReference>
<dbReference type="UCSC" id="uc002jec.5">
    <molecule id="Q8IWB9-1"/>
    <property type="organism name" value="human"/>
</dbReference>
<dbReference type="AGR" id="HGNC:30884"/>
<dbReference type="CTD" id="55852"/>
<dbReference type="DisGeNET" id="55852"/>
<dbReference type="GeneCards" id="TEX2"/>
<dbReference type="HGNC" id="HGNC:30884">
    <property type="gene designation" value="TEX2"/>
</dbReference>
<dbReference type="HPA" id="ENSG00000136478">
    <property type="expression patterns" value="Low tissue specificity"/>
</dbReference>
<dbReference type="MIM" id="619929">
    <property type="type" value="gene"/>
</dbReference>
<dbReference type="neXtProt" id="NX_Q8IWB9"/>
<dbReference type="OpenTargets" id="ENSG00000136478"/>
<dbReference type="PharmGKB" id="PA142670820"/>
<dbReference type="VEuPathDB" id="HostDB:ENSG00000136478"/>
<dbReference type="eggNOG" id="KOG2238">
    <property type="taxonomic scope" value="Eukaryota"/>
</dbReference>
<dbReference type="GeneTree" id="ENSGT00390000000463"/>
<dbReference type="HOGENOM" id="CLU_008315_0_0_1"/>
<dbReference type="InParanoid" id="Q8IWB9"/>
<dbReference type="OMA" id="KRWNTGA"/>
<dbReference type="OrthoDB" id="26740at2759"/>
<dbReference type="PAN-GO" id="Q8IWB9">
    <property type="GO annotations" value="2 GO annotations based on evolutionary models"/>
</dbReference>
<dbReference type="PhylomeDB" id="Q8IWB9"/>
<dbReference type="TreeFam" id="TF314900"/>
<dbReference type="PathwayCommons" id="Q8IWB9"/>
<dbReference type="Reactome" id="R-HSA-8980692">
    <property type="pathway name" value="RHOA GTPase cycle"/>
</dbReference>
<dbReference type="SignaLink" id="Q8IWB9"/>
<dbReference type="BioGRID-ORCS" id="55852">
    <property type="hits" value="36 hits in 1155 CRISPR screens"/>
</dbReference>
<dbReference type="ChiTaRS" id="TEX2">
    <property type="organism name" value="human"/>
</dbReference>
<dbReference type="GenomeRNAi" id="55852"/>
<dbReference type="Pharos" id="Q8IWB9">
    <property type="development level" value="Tbio"/>
</dbReference>
<dbReference type="PRO" id="PR:Q8IWB9"/>
<dbReference type="Proteomes" id="UP000005640">
    <property type="component" value="Chromosome 17"/>
</dbReference>
<dbReference type="RNAct" id="Q8IWB9">
    <property type="molecule type" value="protein"/>
</dbReference>
<dbReference type="Bgee" id="ENSG00000136478">
    <property type="expression patterns" value="Expressed in medial globus pallidus and 204 other cell types or tissues"/>
</dbReference>
<dbReference type="ExpressionAtlas" id="Q8IWB9">
    <property type="expression patterns" value="baseline and differential"/>
</dbReference>
<dbReference type="GO" id="GO:0005783">
    <property type="term" value="C:endoplasmic reticulum"/>
    <property type="evidence" value="ECO:0000318"/>
    <property type="project" value="GO_Central"/>
</dbReference>
<dbReference type="GO" id="GO:0005789">
    <property type="term" value="C:endoplasmic reticulum membrane"/>
    <property type="evidence" value="ECO:0007669"/>
    <property type="project" value="UniProtKB-SubCell"/>
</dbReference>
<dbReference type="GO" id="GO:0016020">
    <property type="term" value="C:membrane"/>
    <property type="evidence" value="ECO:0000303"/>
    <property type="project" value="UniProtKB"/>
</dbReference>
<dbReference type="GO" id="GO:0031965">
    <property type="term" value="C:nuclear membrane"/>
    <property type="evidence" value="ECO:0007669"/>
    <property type="project" value="UniProtKB-SubCell"/>
</dbReference>
<dbReference type="GO" id="GO:0008289">
    <property type="term" value="F:lipid binding"/>
    <property type="evidence" value="ECO:0000318"/>
    <property type="project" value="GO_Central"/>
</dbReference>
<dbReference type="GO" id="GO:0006869">
    <property type="term" value="P:lipid transport"/>
    <property type="evidence" value="ECO:0007669"/>
    <property type="project" value="UniProtKB-KW"/>
</dbReference>
<dbReference type="GO" id="GO:0007165">
    <property type="term" value="P:signal transduction"/>
    <property type="evidence" value="ECO:0000303"/>
    <property type="project" value="UniProtKB"/>
</dbReference>
<dbReference type="GO" id="GO:0006665">
    <property type="term" value="P:sphingolipid metabolic process"/>
    <property type="evidence" value="ECO:0000303"/>
    <property type="project" value="UniProtKB"/>
</dbReference>
<dbReference type="CDD" id="cd21675">
    <property type="entry name" value="SMP_TEX2"/>
    <property type="match status" value="1"/>
</dbReference>
<dbReference type="InterPro" id="IPR031468">
    <property type="entry name" value="SMP_LBD"/>
</dbReference>
<dbReference type="PANTHER" id="PTHR13466:SF2">
    <property type="entry name" value="TESTIS-EXPRESSED PROTEIN 2"/>
    <property type="match status" value="1"/>
</dbReference>
<dbReference type="PANTHER" id="PTHR13466">
    <property type="entry name" value="TEX2 PROTEIN-RELATED"/>
    <property type="match status" value="1"/>
</dbReference>
<dbReference type="PROSITE" id="PS51847">
    <property type="entry name" value="SMP"/>
    <property type="match status" value="1"/>
</dbReference>
<protein>
    <recommendedName>
        <fullName>Testis-expressed protein 2</fullName>
    </recommendedName>
    <alternativeName>
        <fullName>Transmembrane protein 96</fullName>
    </alternativeName>
</protein>
<reference key="1">
    <citation type="journal article" date="2000" name="DNA Res.">
        <title>Prediction of the coding sequences of unidentified human genes. XIX. The complete sequences of 100 new cDNA clones from brain which code for large proteins in vitro.</title>
        <authorList>
            <person name="Nagase T."/>
            <person name="Kikuno R."/>
            <person name="Hattori A."/>
            <person name="Kondo Y."/>
            <person name="Okumura K."/>
            <person name="Ohara O."/>
        </authorList>
    </citation>
    <scope>NUCLEOTIDE SEQUENCE [LARGE SCALE MRNA] (ISOFORM 1)</scope>
    <source>
        <tissue>Brain</tissue>
    </source>
</reference>
<reference key="2">
    <citation type="journal article" date="2007" name="BMC Genomics">
        <title>The full-ORF clone resource of the German cDNA consortium.</title>
        <authorList>
            <person name="Bechtel S."/>
            <person name="Rosenfelder H."/>
            <person name="Duda A."/>
            <person name="Schmidt C.P."/>
            <person name="Ernst U."/>
            <person name="Wellenreuther R."/>
            <person name="Mehrle A."/>
            <person name="Schuster C."/>
            <person name="Bahr A."/>
            <person name="Bloecker H."/>
            <person name="Heubner D."/>
            <person name="Hoerlein A."/>
            <person name="Michel G."/>
            <person name="Wedler H."/>
            <person name="Koehrer K."/>
            <person name="Ottenwaelder B."/>
            <person name="Poustka A."/>
            <person name="Wiemann S."/>
            <person name="Schupp I."/>
        </authorList>
    </citation>
    <scope>NUCLEOTIDE SEQUENCE [LARGE SCALE MRNA] (ISOFORM 1)</scope>
    <source>
        <tissue>Skeletal muscle</tissue>
        <tissue>Testis</tissue>
    </source>
</reference>
<reference key="3">
    <citation type="journal article" date="2004" name="Genome Res.">
        <title>The status, quality, and expansion of the NIH full-length cDNA project: the Mammalian Gene Collection (MGC).</title>
        <authorList>
            <consortium name="The MGC Project Team"/>
        </authorList>
    </citation>
    <scope>NUCLEOTIDE SEQUENCE [LARGE SCALE MRNA] (ISOFORM 2)</scope>
    <source>
        <tissue>Testis</tissue>
    </source>
</reference>
<reference key="4">
    <citation type="journal article" date="2008" name="Proc. Natl. Acad. Sci. U.S.A.">
        <title>A quantitative atlas of mitotic phosphorylation.</title>
        <authorList>
            <person name="Dephoure N."/>
            <person name="Zhou C."/>
            <person name="Villen J."/>
            <person name="Beausoleil S.A."/>
            <person name="Bakalarski C.E."/>
            <person name="Elledge S.J."/>
            <person name="Gygi S.P."/>
        </authorList>
    </citation>
    <scope>PHOSPHORYLATION [LARGE SCALE ANALYSIS] AT SER-196; SER-266; SER-270 AND SER-295</scope>
    <scope>IDENTIFICATION BY MASS SPECTROMETRY [LARGE SCALE ANALYSIS]</scope>
    <source>
        <tissue>Cervix carcinoma</tissue>
    </source>
</reference>
<reference key="5">
    <citation type="journal article" date="2009" name="Sci. Signal.">
        <title>Quantitative phosphoproteomic analysis of T cell receptor signaling reveals system-wide modulation of protein-protein interactions.</title>
        <authorList>
            <person name="Mayya V."/>
            <person name="Lundgren D.H."/>
            <person name="Hwang S.-I."/>
            <person name="Rezaul K."/>
            <person name="Wu L."/>
            <person name="Eng J.K."/>
            <person name="Rodionov V."/>
            <person name="Han D.K."/>
        </authorList>
    </citation>
    <scope>PHOSPHORYLATION [LARGE SCALE ANALYSIS] AT SER-295</scope>
    <scope>IDENTIFICATION BY MASS SPECTROMETRY [LARGE SCALE ANALYSIS]</scope>
    <source>
        <tissue>Leukemic T-cell</tissue>
    </source>
</reference>
<reference key="6">
    <citation type="journal article" date="2010" name="Sci. Signal.">
        <title>Quantitative phosphoproteomics reveals widespread full phosphorylation site occupancy during mitosis.</title>
        <authorList>
            <person name="Olsen J.V."/>
            <person name="Vermeulen M."/>
            <person name="Santamaria A."/>
            <person name="Kumar C."/>
            <person name="Miller M.L."/>
            <person name="Jensen L.J."/>
            <person name="Gnad F."/>
            <person name="Cox J."/>
            <person name="Jensen T.S."/>
            <person name="Nigg E.A."/>
            <person name="Brunak S."/>
            <person name="Mann M."/>
        </authorList>
    </citation>
    <scope>PHOSPHORYLATION [LARGE SCALE ANALYSIS] AT SER-744</scope>
    <scope>IDENTIFICATION BY MASS SPECTROMETRY [LARGE SCALE ANALYSIS]</scope>
    <source>
        <tissue>Cervix carcinoma</tissue>
    </source>
</reference>
<reference key="7">
    <citation type="journal article" date="2013" name="J. Proteome Res.">
        <title>Toward a comprehensive characterization of a human cancer cell phosphoproteome.</title>
        <authorList>
            <person name="Zhou H."/>
            <person name="Di Palma S."/>
            <person name="Preisinger C."/>
            <person name="Peng M."/>
            <person name="Polat A.N."/>
            <person name="Heck A.J."/>
            <person name="Mohammed S."/>
        </authorList>
    </citation>
    <scope>PHOSPHORYLATION [LARGE SCALE ANALYSIS] AT SER-196; SER-266 AND SER-732</scope>
    <scope>IDENTIFICATION BY MASS SPECTROMETRY [LARGE SCALE ANALYSIS]</scope>
    <source>
        <tissue>Cervix carcinoma</tissue>
        <tissue>Erythroleukemia</tissue>
    </source>
</reference>
<reference key="8">
    <citation type="journal article" date="2014" name="J. Proteomics">
        <title>An enzyme assisted RP-RPLC approach for in-depth analysis of human liver phosphoproteome.</title>
        <authorList>
            <person name="Bian Y."/>
            <person name="Song C."/>
            <person name="Cheng K."/>
            <person name="Dong M."/>
            <person name="Wang F."/>
            <person name="Huang J."/>
            <person name="Sun D."/>
            <person name="Wang L."/>
            <person name="Ye M."/>
            <person name="Zou H."/>
        </authorList>
    </citation>
    <scope>PHOSPHORYLATION [LARGE SCALE ANALYSIS] AT SER-266; SER-295; SER-732; SER-738 AND SER-744</scope>
    <scope>IDENTIFICATION BY MASS SPECTROMETRY [LARGE SCALE ANALYSIS]</scope>
    <source>
        <tissue>Liver</tissue>
    </source>
</reference>
<reference key="9">
    <citation type="journal article" date="2012" name="J. Cell Sci.">
        <title>A conserved membrane-binding domain targets proteins to organelle contact sites.</title>
        <authorList>
            <person name="Toulmay A."/>
            <person name="Prinz W.A."/>
        </authorList>
    </citation>
    <scope>SUBCELLULAR LOCATION</scope>
</reference>
<reference key="10">
    <citation type="journal article" date="2017" name="J. Cell Biol.">
        <title>An inducible ER-Golgi tether facilitates ceramide transport to alleviate lipotoxicity.</title>
        <authorList>
            <person name="Liu L.K."/>
            <person name="Choudhary V."/>
            <person name="Toulmay A."/>
            <person name="Prinz W.A."/>
        </authorList>
    </citation>
    <scope>FUNCTION</scope>
</reference>
<keyword id="KW-0025">Alternative splicing</keyword>
<keyword id="KW-0256">Endoplasmic reticulum</keyword>
<keyword id="KW-0325">Glycoprotein</keyword>
<keyword id="KW-0445">Lipid transport</keyword>
<keyword id="KW-0446">Lipid-binding</keyword>
<keyword id="KW-0472">Membrane</keyword>
<keyword id="KW-0539">Nucleus</keyword>
<keyword id="KW-0597">Phosphoprotein</keyword>
<keyword id="KW-1267">Proteomics identification</keyword>
<keyword id="KW-1185">Reference proteome</keyword>
<keyword id="KW-0812">Transmembrane</keyword>
<keyword id="KW-1133">Transmembrane helix</keyword>
<keyword id="KW-0813">Transport</keyword>
<organism>
    <name type="scientific">Homo sapiens</name>
    <name type="common">Human</name>
    <dbReference type="NCBI Taxonomy" id="9606"/>
    <lineage>
        <taxon>Eukaryota</taxon>
        <taxon>Metazoa</taxon>
        <taxon>Chordata</taxon>
        <taxon>Craniata</taxon>
        <taxon>Vertebrata</taxon>
        <taxon>Euteleostomi</taxon>
        <taxon>Mammalia</taxon>
        <taxon>Eutheria</taxon>
        <taxon>Euarchontoglires</taxon>
        <taxon>Primates</taxon>
        <taxon>Haplorrhini</taxon>
        <taxon>Catarrhini</taxon>
        <taxon>Hominidae</taxon>
        <taxon>Homo</taxon>
    </lineage>
</organism>
<comment type="function">
    <text evidence="7">During endoplasmic reticulum (ER) stress or when cellular ceramide levels increase, may induce contacts between the ER and medial-Golgi complex to facilitate non-vesicular transport of ceramides from the ER to the Golgi complex where they are converted to complex sphingolipids, preventing toxic ceramide accumulation.</text>
</comment>
<comment type="subcellular location">
    <subcellularLocation>
        <location evidence="1">Endoplasmic reticulum membrane</location>
        <topology evidence="3">Multi-pass membrane protein</topology>
    </subcellularLocation>
    <subcellularLocation>
        <location evidence="1">Nucleus membrane</location>
        <topology evidence="3">Multi-pass membrane protein</topology>
    </subcellularLocation>
    <text evidence="1 6">Enriched at the nucleus-vacuole junction (PubMed:22250200). During endoplasmic reticulum (ER) stress, localizes to ER-Golgi contacts (By similarity).</text>
</comment>
<comment type="alternative products">
    <event type="alternative splicing"/>
    <isoform>
        <id>Q8IWB9-1</id>
        <name>1</name>
        <sequence type="displayed"/>
    </isoform>
    <isoform>
        <id>Q8IWB9-2</id>
        <name>2</name>
        <sequence type="described" ref="VSP_019569"/>
    </isoform>
</comment>
<comment type="domain">
    <text evidence="4">The SMP-LTD domain is a barrel-like domain that can bind various types of glycerophospholipids in its interior and mediate their transfer between two adjacent bilayers.</text>
</comment>
<sequence>MTSLYGRHAEKTTDMPKPSAPKVHVQRSVSRDTIAIHFSASGEEEEEEEEEFREYFEEGLDDQSIVTGLEAKEDLYLEPQVGHDPAGPAASPVLADGLSVSQAPAILPVSKNTVKLLESPVPAAQVLSTVPLAVSPGSSSSGPLASSPSVSSLSEQKTSSSSPLSSPSKSPILSSSASTSTLSSAKPFMSLVKSLSTEVEPKESPHPARHRHLMKTLVKSLSTDTSRQESDTVSYKPPDSKLNLHLFKQFTQPRNTGGDSKTAPSSPLTSPSDTRSFFKVPEMEAKIEDTKRRLSEVIYEPFQLLSKIIGEESGSHRPKALSSSASELSNLSSLNGHLESNNNYSIKEEECDSEGDGYGSDSNIPRSDHPKSTGEPTREIELKSSQGSSLKDLGLKTSSLVLEKCSLSALVSKEDEEFCELYTEDFDLETEGESKVDKLSDIPLKPEVLAEDGVVLDSEDEVDSAVQHPELPVKTLGFFIMCVYVYLILPLPHYVSGLFLGIGLGFMTAVCVIWFFTPPSAHKYHKLHKNLRHWNTRSLDIKEPEILKGWMNEIYNYDPETYHATLTHSVFVRLEGGTLRLSKPNKNISRRASYNEPKPEVTYISQKIYDLSDSKIYLVPKTLARKRIWNKKYPICIELGQQDDFMSKAQTDKETSEEKPPAEGSEDPKKPPRPQEGTRSSQRDQILYLFGRTGREKEEWFRRFILASKLKSEIKKSSGVSGGKPGLLPAHSRHNSPSGHLTHSRSSSKGSVEEIMSQPKQKELAGSVRQKMLLDYSVYMGRCVPQESRSPQRSPLQSAESSPTAGKKLPEVPPSEEEEQEAWVNALLGRIFWDFLGEKYWSDLVSKKIQMKLSKIKLPYFMNELTLTELDMGVAVPKILQAFKPYVDHQGLWIDLEMSYNGSFLMTLETKMNLTKLGKEPLVEALKVGEIGKEGCRPRAFCLADSDEESSSAGSSEEDDAPEPSGGDKQLLPGAEGYVGGHRTSKIMRFVDKITKSKYFQKATETEFIKKKIEEVSNTPLLLTVEVQECRGTLAVNIPPPPTDRVWYGFRKPPHVELKARPKLGEREVTLVHVTDWIEKKLEQEFQKVFVMPNMDDVYITIMHSAMDPRSTSCLLKDPPVEAADQP</sequence>
<evidence type="ECO:0000250" key="1">
    <source>
        <dbReference type="UniProtKB" id="Q06833"/>
    </source>
</evidence>
<evidence type="ECO:0000250" key="2">
    <source>
        <dbReference type="UniProtKB" id="Q6ZPJ0"/>
    </source>
</evidence>
<evidence type="ECO:0000255" key="3"/>
<evidence type="ECO:0000255" key="4">
    <source>
        <dbReference type="PROSITE-ProRule" id="PRU01194"/>
    </source>
</evidence>
<evidence type="ECO:0000256" key="5">
    <source>
        <dbReference type="SAM" id="MobiDB-lite"/>
    </source>
</evidence>
<evidence type="ECO:0000269" key="6">
    <source>
    </source>
</evidence>
<evidence type="ECO:0000269" key="7">
    <source>
    </source>
</evidence>
<evidence type="ECO:0000303" key="8">
    <source>
    </source>
</evidence>
<evidence type="ECO:0000305" key="9"/>
<evidence type="ECO:0007744" key="10">
    <source>
    </source>
</evidence>
<evidence type="ECO:0007744" key="11">
    <source>
    </source>
</evidence>
<evidence type="ECO:0007744" key="12">
    <source>
    </source>
</evidence>
<evidence type="ECO:0007744" key="13">
    <source>
    </source>
</evidence>
<evidence type="ECO:0007744" key="14">
    <source>
    </source>
</evidence>
<gene>
    <name type="primary">TEX2</name>
    <name type="synonym">KIAA1738</name>
    <name type="synonym">TMEM96</name>
</gene>
<proteinExistence type="evidence at protein level"/>
<name>TEX2_HUMAN</name>